<organism>
    <name type="scientific">Pasteurella multocida (strain Pm70)</name>
    <dbReference type="NCBI Taxonomy" id="272843"/>
    <lineage>
        <taxon>Bacteria</taxon>
        <taxon>Pseudomonadati</taxon>
        <taxon>Pseudomonadota</taxon>
        <taxon>Gammaproteobacteria</taxon>
        <taxon>Pasteurellales</taxon>
        <taxon>Pasteurellaceae</taxon>
        <taxon>Pasteurella</taxon>
    </lineage>
</organism>
<comment type="function">
    <text evidence="1">Part of a membrane-bound complex that couples electron transfer with translocation of ions across the membrane.</text>
</comment>
<comment type="cofactor">
    <cofactor evidence="1">
        <name>FMN</name>
        <dbReference type="ChEBI" id="CHEBI:58210"/>
    </cofactor>
</comment>
<comment type="subunit">
    <text evidence="1">The complex is composed of six subunits: RnfA, RnfB, RnfC, RnfD, RnfE and RnfG.</text>
</comment>
<comment type="subcellular location">
    <subcellularLocation>
        <location evidence="1">Cell inner membrane</location>
        <topology evidence="1">Single-pass membrane protein</topology>
    </subcellularLocation>
</comment>
<comment type="similarity">
    <text evidence="1">Belongs to the RnfG family.</text>
</comment>
<evidence type="ECO:0000255" key="1">
    <source>
        <dbReference type="HAMAP-Rule" id="MF_00479"/>
    </source>
</evidence>
<gene>
    <name evidence="1" type="primary">rnfG</name>
    <name type="ordered locus">PM0383</name>
</gene>
<feature type="chain" id="PRO_0000214636" description="Ion-translocating oxidoreductase complex subunit G">
    <location>
        <begin position="1"/>
        <end position="202"/>
    </location>
</feature>
<feature type="transmembrane region" description="Helical" evidence="1">
    <location>
        <begin position="11"/>
        <end position="31"/>
    </location>
</feature>
<feature type="modified residue" description="FMN phosphoryl threonine" evidence="1">
    <location>
        <position position="177"/>
    </location>
</feature>
<dbReference type="EC" id="7.-.-.-" evidence="1"/>
<dbReference type="EMBL" id="AE004439">
    <property type="protein sequence ID" value="AAK02467.1"/>
    <property type="molecule type" value="Genomic_DNA"/>
</dbReference>
<dbReference type="SMR" id="Q9CNP4"/>
<dbReference type="STRING" id="272843.PM0383"/>
<dbReference type="EnsemblBacteria" id="AAK02467">
    <property type="protein sequence ID" value="AAK02467"/>
    <property type="gene ID" value="PM0383"/>
</dbReference>
<dbReference type="KEGG" id="pmu:PM0383"/>
<dbReference type="PATRIC" id="fig|272843.6.peg.396"/>
<dbReference type="HOGENOM" id="CLU_077882_1_0_6"/>
<dbReference type="OrthoDB" id="9784165at2"/>
<dbReference type="Proteomes" id="UP000000809">
    <property type="component" value="Chromosome"/>
</dbReference>
<dbReference type="GO" id="GO:0005886">
    <property type="term" value="C:plasma membrane"/>
    <property type="evidence" value="ECO:0007669"/>
    <property type="project" value="UniProtKB-SubCell"/>
</dbReference>
<dbReference type="GO" id="GO:0009055">
    <property type="term" value="F:electron transfer activity"/>
    <property type="evidence" value="ECO:0007669"/>
    <property type="project" value="InterPro"/>
</dbReference>
<dbReference type="GO" id="GO:0010181">
    <property type="term" value="F:FMN binding"/>
    <property type="evidence" value="ECO:0007669"/>
    <property type="project" value="InterPro"/>
</dbReference>
<dbReference type="GO" id="GO:0022900">
    <property type="term" value="P:electron transport chain"/>
    <property type="evidence" value="ECO:0007669"/>
    <property type="project" value="UniProtKB-UniRule"/>
</dbReference>
<dbReference type="HAMAP" id="MF_00479">
    <property type="entry name" value="RsxG_RnfG"/>
    <property type="match status" value="1"/>
</dbReference>
<dbReference type="InterPro" id="IPR007329">
    <property type="entry name" value="FMN-bd"/>
</dbReference>
<dbReference type="InterPro" id="IPR010209">
    <property type="entry name" value="Ion_transpt_RnfG/RsxG"/>
</dbReference>
<dbReference type="NCBIfam" id="NF002519">
    <property type="entry name" value="PRK01908.1"/>
    <property type="match status" value="1"/>
</dbReference>
<dbReference type="NCBIfam" id="TIGR01947">
    <property type="entry name" value="rnfG"/>
    <property type="match status" value="1"/>
</dbReference>
<dbReference type="PANTHER" id="PTHR36118">
    <property type="entry name" value="ION-TRANSLOCATING OXIDOREDUCTASE COMPLEX SUBUNIT G"/>
    <property type="match status" value="1"/>
</dbReference>
<dbReference type="PANTHER" id="PTHR36118:SF1">
    <property type="entry name" value="ION-TRANSLOCATING OXIDOREDUCTASE COMPLEX SUBUNIT G"/>
    <property type="match status" value="1"/>
</dbReference>
<dbReference type="Pfam" id="PF04205">
    <property type="entry name" value="FMN_bind"/>
    <property type="match status" value="1"/>
</dbReference>
<dbReference type="PIRSF" id="PIRSF006091">
    <property type="entry name" value="E_trnsport_RnfG"/>
    <property type="match status" value="1"/>
</dbReference>
<dbReference type="SMART" id="SM00900">
    <property type="entry name" value="FMN_bind"/>
    <property type="match status" value="1"/>
</dbReference>
<name>RNFG_PASMU</name>
<keyword id="KW-0997">Cell inner membrane</keyword>
<keyword id="KW-1003">Cell membrane</keyword>
<keyword id="KW-0249">Electron transport</keyword>
<keyword id="KW-0285">Flavoprotein</keyword>
<keyword id="KW-0288">FMN</keyword>
<keyword id="KW-0472">Membrane</keyword>
<keyword id="KW-0597">Phosphoprotein</keyword>
<keyword id="KW-1185">Reference proteome</keyword>
<keyword id="KW-1278">Translocase</keyword>
<keyword id="KW-0812">Transmembrane</keyword>
<keyword id="KW-1133">Transmembrane helix</keyword>
<keyword id="KW-0813">Transport</keyword>
<accession>Q9CNP4</accession>
<reference key="1">
    <citation type="journal article" date="2001" name="Proc. Natl. Acad. Sci. U.S.A.">
        <title>Complete genomic sequence of Pasteurella multocida Pm70.</title>
        <authorList>
            <person name="May B.J."/>
            <person name="Zhang Q."/>
            <person name="Li L.L."/>
            <person name="Paustian M.L."/>
            <person name="Whittam T.S."/>
            <person name="Kapur V."/>
        </authorList>
    </citation>
    <scope>NUCLEOTIDE SEQUENCE [LARGE SCALE GENOMIC DNA]</scope>
    <source>
        <strain>Pm70</strain>
    </source>
</reference>
<protein>
    <recommendedName>
        <fullName evidence="1">Ion-translocating oxidoreductase complex subunit G</fullName>
        <ecNumber evidence="1">7.-.-.-</ecNumber>
    </recommendedName>
    <alternativeName>
        <fullName evidence="1">Rnf electron transport complex subunit G</fullName>
    </alternativeName>
</protein>
<sequence length="202" mass="22450">MKTVKISAYYAILLALIALICTALSTGIYLLTKSKIEDEINKQRQALLLEVVPQAYFDNPLSENCQRPNSEKLRAQRIDRLCIATKNNQKTAYAFETVAPDGYAGRIRLLVGITPTGTILGVRVLEHQETPGLGDKIETRISDWILSFSQQQLRSDNLADWAVKKDGGKFDQFAGATITPRAVVNQVKQSALSLLDELNQEN</sequence>
<proteinExistence type="inferred from homology"/>